<dbReference type="EMBL" id="BA000017">
    <property type="protein sequence ID" value="BAB58073.1"/>
    <property type="molecule type" value="Genomic_DNA"/>
</dbReference>
<dbReference type="RefSeq" id="WP_000011542.1">
    <property type="nucleotide sequence ID" value="NC_002758.2"/>
</dbReference>
<dbReference type="SMR" id="P61543"/>
<dbReference type="KEGG" id="sav:SAV1911"/>
<dbReference type="HOGENOM" id="CLU_106166_1_0_9"/>
<dbReference type="PhylomeDB" id="P61543"/>
<dbReference type="Proteomes" id="UP000002481">
    <property type="component" value="Chromosome"/>
</dbReference>
<dbReference type="GO" id="GO:0005886">
    <property type="term" value="C:plasma membrane"/>
    <property type="evidence" value="ECO:0007669"/>
    <property type="project" value="UniProtKB-SubCell"/>
</dbReference>
<dbReference type="CDD" id="cd16381">
    <property type="entry name" value="YitT_C_like_1"/>
    <property type="match status" value="1"/>
</dbReference>
<dbReference type="HAMAP" id="MF_01515">
    <property type="entry name" value="UPF0316"/>
    <property type="match status" value="1"/>
</dbReference>
<dbReference type="InterPro" id="IPR019264">
    <property type="entry name" value="DUF2179"/>
</dbReference>
<dbReference type="InterPro" id="IPR044035">
    <property type="entry name" value="DUF5698"/>
</dbReference>
<dbReference type="InterPro" id="IPR022930">
    <property type="entry name" value="UPF0316"/>
</dbReference>
<dbReference type="NCBIfam" id="NF003190">
    <property type="entry name" value="PRK04164.1-1"/>
    <property type="match status" value="1"/>
</dbReference>
<dbReference type="NCBIfam" id="NF003194">
    <property type="entry name" value="PRK04164.1-5"/>
    <property type="match status" value="1"/>
</dbReference>
<dbReference type="PANTHER" id="PTHR40060">
    <property type="entry name" value="UPF0316 PROTEIN YEBE"/>
    <property type="match status" value="1"/>
</dbReference>
<dbReference type="PANTHER" id="PTHR40060:SF1">
    <property type="entry name" value="UPF0316 PROTEIN YEBE"/>
    <property type="match status" value="1"/>
</dbReference>
<dbReference type="Pfam" id="PF10035">
    <property type="entry name" value="DUF2179"/>
    <property type="match status" value="1"/>
</dbReference>
<dbReference type="Pfam" id="PF18955">
    <property type="entry name" value="DUF5698"/>
    <property type="match status" value="1"/>
</dbReference>
<accession>P61543</accession>
<accession>Q99SX6</accession>
<gene>
    <name type="ordered locus">SAV1911</name>
</gene>
<reference key="1">
    <citation type="journal article" date="2001" name="Lancet">
        <title>Whole genome sequencing of meticillin-resistant Staphylococcus aureus.</title>
        <authorList>
            <person name="Kuroda M."/>
            <person name="Ohta T."/>
            <person name="Uchiyama I."/>
            <person name="Baba T."/>
            <person name="Yuzawa H."/>
            <person name="Kobayashi I."/>
            <person name="Cui L."/>
            <person name="Oguchi A."/>
            <person name="Aoki K."/>
            <person name="Nagai Y."/>
            <person name="Lian J.-Q."/>
            <person name="Ito T."/>
            <person name="Kanamori M."/>
            <person name="Matsumaru H."/>
            <person name="Maruyama A."/>
            <person name="Murakami H."/>
            <person name="Hosoyama A."/>
            <person name="Mizutani-Ui Y."/>
            <person name="Takahashi N.K."/>
            <person name="Sawano T."/>
            <person name="Inoue R."/>
            <person name="Kaito C."/>
            <person name="Sekimizu K."/>
            <person name="Hirakawa H."/>
            <person name="Kuhara S."/>
            <person name="Goto S."/>
            <person name="Yabuzaki J."/>
            <person name="Kanehisa M."/>
            <person name="Yamashita A."/>
            <person name="Oshima K."/>
            <person name="Furuya K."/>
            <person name="Yoshino C."/>
            <person name="Shiba T."/>
            <person name="Hattori M."/>
            <person name="Ogasawara N."/>
            <person name="Hayashi H."/>
            <person name="Hiramatsu K."/>
        </authorList>
    </citation>
    <scope>NUCLEOTIDE SEQUENCE [LARGE SCALE GENOMIC DNA]</scope>
    <source>
        <strain>Mu50 / ATCC 700699</strain>
    </source>
</reference>
<comment type="subcellular location">
    <subcellularLocation>
        <location evidence="1">Cell membrane</location>
        <topology evidence="1">Multi-pass membrane protein</topology>
    </subcellularLocation>
</comment>
<comment type="similarity">
    <text evidence="1">Belongs to the UPF0316 family.</text>
</comment>
<proteinExistence type="inferred from homology"/>
<evidence type="ECO:0000255" key="1">
    <source>
        <dbReference type="HAMAP-Rule" id="MF_01515"/>
    </source>
</evidence>
<name>Y1911_STAAM</name>
<organism>
    <name type="scientific">Staphylococcus aureus (strain Mu50 / ATCC 700699)</name>
    <dbReference type="NCBI Taxonomy" id="158878"/>
    <lineage>
        <taxon>Bacteria</taxon>
        <taxon>Bacillati</taxon>
        <taxon>Bacillota</taxon>
        <taxon>Bacilli</taxon>
        <taxon>Bacillales</taxon>
        <taxon>Staphylococcaceae</taxon>
        <taxon>Staphylococcus</taxon>
    </lineage>
</organism>
<keyword id="KW-1003">Cell membrane</keyword>
<keyword id="KW-0472">Membrane</keyword>
<keyword id="KW-0812">Transmembrane</keyword>
<keyword id="KW-1133">Transmembrane helix</keyword>
<feature type="chain" id="PRO_0000171951" description="UPF0316 protein SAV1911">
    <location>
        <begin position="1"/>
        <end position="200"/>
    </location>
</feature>
<feature type="transmembrane region" description="Helical" evidence="1">
    <location>
        <begin position="8"/>
        <end position="28"/>
    </location>
</feature>
<feature type="transmembrane region" description="Helical" evidence="1">
    <location>
        <begin position="40"/>
        <end position="60"/>
    </location>
</feature>
<feature type="transmembrane region" description="Helical" evidence="1">
    <location>
        <begin position="66"/>
        <end position="86"/>
    </location>
</feature>
<sequence>MSFVTENPWLMVLTIFIINVCYVTFLTMRTILTLKGYRYIAASVSFLEVLVYIVGLGLVMSNLDHIQNIIAYAFGFSIGIIVGMKIEEKLALGYTVVNVTSAEYELDLPNELRNLGYGVTHYAAFGRDGSRMVMQILTPRKYERKLMDTIKNLDPKAFIIAYEPRNIHGGFWTKGIRRRKLKDYEPEELESVVEHEIQSK</sequence>
<protein>
    <recommendedName>
        <fullName evidence="1">UPF0316 protein SAV1911</fullName>
    </recommendedName>
</protein>